<feature type="signal peptide" evidence="1">
    <location>
        <begin position="1"/>
        <end position="16"/>
    </location>
</feature>
<feature type="chain" id="PRO_1000049610" description="Thiol:disulfide interchange protein DsbD">
    <location>
        <begin position="17"/>
        <end position="579"/>
    </location>
</feature>
<feature type="transmembrane region" description="Helical" evidence="1">
    <location>
        <begin position="178"/>
        <end position="198"/>
    </location>
</feature>
<feature type="transmembrane region" description="Helical" evidence="1">
    <location>
        <begin position="230"/>
        <end position="250"/>
    </location>
</feature>
<feature type="transmembrane region" description="Helical" evidence="1">
    <location>
        <begin position="254"/>
        <end position="274"/>
    </location>
</feature>
<feature type="transmembrane region" description="Helical" evidence="1">
    <location>
        <begin position="296"/>
        <end position="316"/>
    </location>
</feature>
<feature type="transmembrane region" description="Helical" evidence="1">
    <location>
        <begin position="337"/>
        <end position="357"/>
    </location>
</feature>
<feature type="transmembrane region" description="Helical" evidence="1">
    <location>
        <begin position="376"/>
        <end position="396"/>
    </location>
</feature>
<feature type="transmembrane region" description="Helical" evidence="1">
    <location>
        <begin position="397"/>
        <end position="417"/>
    </location>
</feature>
<feature type="transmembrane region" description="Helical" evidence="1">
    <location>
        <begin position="420"/>
        <end position="440"/>
    </location>
</feature>
<feature type="domain" description="Thioredoxin" evidence="1">
    <location>
        <begin position="449"/>
        <end position="579"/>
    </location>
</feature>
<feature type="disulfide bond" description="Redox-active" evidence="1">
    <location>
        <begin position="124"/>
        <end position="129"/>
    </location>
</feature>
<feature type="disulfide bond" description="Redox-active" evidence="1">
    <location>
        <begin position="193"/>
        <end position="315"/>
    </location>
</feature>
<feature type="disulfide bond" description="Redox-active" evidence="1">
    <location>
        <begin position="495"/>
        <end position="498"/>
    </location>
</feature>
<protein>
    <recommendedName>
        <fullName evidence="1">Thiol:disulfide interchange protein DsbD</fullName>
        <ecNumber evidence="1">1.8.1.8</ecNumber>
    </recommendedName>
    <alternativeName>
        <fullName evidence="1">Protein-disulfide reductase</fullName>
        <shortName evidence="1">Disulfide reductase</shortName>
    </alternativeName>
</protein>
<gene>
    <name evidence="1" type="primary">dsbD</name>
    <name type="ordered locus">CGSHiGG_07975</name>
</gene>
<evidence type="ECO:0000255" key="1">
    <source>
        <dbReference type="HAMAP-Rule" id="MF_00399"/>
    </source>
</evidence>
<comment type="function">
    <text evidence="1">Required to facilitate the formation of correct disulfide bonds in some periplasmic proteins and for the assembly of the periplasmic c-type cytochromes. Acts by transferring electrons from cytoplasmic thioredoxin to the periplasm. This transfer involves a cascade of disulfide bond formation and reduction steps.</text>
</comment>
<comment type="catalytic activity">
    <reaction evidence="1">
        <text>[protein]-dithiol + NAD(+) = [protein]-disulfide + NADH + H(+)</text>
        <dbReference type="Rhea" id="RHEA:18749"/>
        <dbReference type="Rhea" id="RHEA-COMP:10593"/>
        <dbReference type="Rhea" id="RHEA-COMP:10594"/>
        <dbReference type="ChEBI" id="CHEBI:15378"/>
        <dbReference type="ChEBI" id="CHEBI:29950"/>
        <dbReference type="ChEBI" id="CHEBI:50058"/>
        <dbReference type="ChEBI" id="CHEBI:57540"/>
        <dbReference type="ChEBI" id="CHEBI:57945"/>
        <dbReference type="EC" id="1.8.1.8"/>
    </reaction>
</comment>
<comment type="catalytic activity">
    <reaction evidence="1">
        <text>[protein]-dithiol + NADP(+) = [protein]-disulfide + NADPH + H(+)</text>
        <dbReference type="Rhea" id="RHEA:18753"/>
        <dbReference type="Rhea" id="RHEA-COMP:10593"/>
        <dbReference type="Rhea" id="RHEA-COMP:10594"/>
        <dbReference type="ChEBI" id="CHEBI:15378"/>
        <dbReference type="ChEBI" id="CHEBI:29950"/>
        <dbReference type="ChEBI" id="CHEBI:50058"/>
        <dbReference type="ChEBI" id="CHEBI:57783"/>
        <dbReference type="ChEBI" id="CHEBI:58349"/>
        <dbReference type="EC" id="1.8.1.8"/>
    </reaction>
</comment>
<comment type="subcellular location">
    <subcellularLocation>
        <location evidence="1">Cell inner membrane</location>
        <topology evidence="1">Multi-pass membrane protein</topology>
    </subcellularLocation>
</comment>
<comment type="similarity">
    <text evidence="1">Belongs to the thioredoxin family. DsbD subfamily.</text>
</comment>
<accession>A5UI29</accession>
<name>DSBD_HAEIG</name>
<organism>
    <name type="scientific">Haemophilus influenzae (strain PittGG)</name>
    <dbReference type="NCBI Taxonomy" id="374931"/>
    <lineage>
        <taxon>Bacteria</taxon>
        <taxon>Pseudomonadati</taxon>
        <taxon>Pseudomonadota</taxon>
        <taxon>Gammaproteobacteria</taxon>
        <taxon>Pasteurellales</taxon>
        <taxon>Pasteurellaceae</taxon>
        <taxon>Haemophilus</taxon>
    </lineage>
</organism>
<dbReference type="EC" id="1.8.1.8" evidence="1"/>
<dbReference type="EMBL" id="CP000672">
    <property type="protein sequence ID" value="ABR00435.1"/>
    <property type="molecule type" value="Genomic_DNA"/>
</dbReference>
<dbReference type="SMR" id="A5UI29"/>
<dbReference type="KEGG" id="hiq:CGSHiGG_07975"/>
<dbReference type="HOGENOM" id="CLU_014657_3_0_6"/>
<dbReference type="Proteomes" id="UP000001990">
    <property type="component" value="Chromosome"/>
</dbReference>
<dbReference type="GO" id="GO:0005886">
    <property type="term" value="C:plasma membrane"/>
    <property type="evidence" value="ECO:0007669"/>
    <property type="project" value="UniProtKB-SubCell"/>
</dbReference>
<dbReference type="GO" id="GO:0009055">
    <property type="term" value="F:electron transfer activity"/>
    <property type="evidence" value="ECO:0007669"/>
    <property type="project" value="UniProtKB-UniRule"/>
</dbReference>
<dbReference type="GO" id="GO:0047134">
    <property type="term" value="F:protein-disulfide reductase [NAD(P)H] activity"/>
    <property type="evidence" value="ECO:0007669"/>
    <property type="project" value="UniProtKB-UniRule"/>
</dbReference>
<dbReference type="GO" id="GO:0045454">
    <property type="term" value="P:cell redox homeostasis"/>
    <property type="evidence" value="ECO:0007669"/>
    <property type="project" value="TreeGrafter"/>
</dbReference>
<dbReference type="GO" id="GO:0017004">
    <property type="term" value="P:cytochrome complex assembly"/>
    <property type="evidence" value="ECO:0007669"/>
    <property type="project" value="UniProtKB-UniRule"/>
</dbReference>
<dbReference type="CDD" id="cd02953">
    <property type="entry name" value="DsbDgamma"/>
    <property type="match status" value="1"/>
</dbReference>
<dbReference type="FunFam" id="2.60.40.1250:FF:000002">
    <property type="entry name" value="Thiol:disulfide interchange protein DsbD"/>
    <property type="match status" value="1"/>
</dbReference>
<dbReference type="FunFam" id="3.40.30.10:FF:000116">
    <property type="entry name" value="Thiol:disulfide interchange protein DsbD"/>
    <property type="match status" value="1"/>
</dbReference>
<dbReference type="Gene3D" id="3.40.30.10">
    <property type="entry name" value="Glutaredoxin"/>
    <property type="match status" value="1"/>
</dbReference>
<dbReference type="Gene3D" id="2.60.40.1250">
    <property type="entry name" value="Thiol:disulfide interchange protein DsbD, N-terminal domain"/>
    <property type="match status" value="1"/>
</dbReference>
<dbReference type="HAMAP" id="MF_00399">
    <property type="entry name" value="DbsD"/>
    <property type="match status" value="1"/>
</dbReference>
<dbReference type="InterPro" id="IPR003834">
    <property type="entry name" value="Cyt_c_assmbl_TM_dom"/>
</dbReference>
<dbReference type="InterPro" id="IPR035671">
    <property type="entry name" value="DsbD_gamma"/>
</dbReference>
<dbReference type="InterPro" id="IPR028250">
    <property type="entry name" value="DsbDN"/>
</dbReference>
<dbReference type="InterPro" id="IPR036929">
    <property type="entry name" value="DsbDN_sf"/>
</dbReference>
<dbReference type="InterPro" id="IPR022910">
    <property type="entry name" value="Thiol_diS_interchange_DbsD"/>
</dbReference>
<dbReference type="InterPro" id="IPR012336">
    <property type="entry name" value="Thioredoxin-like_fold"/>
</dbReference>
<dbReference type="InterPro" id="IPR036249">
    <property type="entry name" value="Thioredoxin-like_sf"/>
</dbReference>
<dbReference type="InterPro" id="IPR017937">
    <property type="entry name" value="Thioredoxin_CS"/>
</dbReference>
<dbReference type="InterPro" id="IPR013766">
    <property type="entry name" value="Thioredoxin_domain"/>
</dbReference>
<dbReference type="NCBIfam" id="NF001419">
    <property type="entry name" value="PRK00293.1"/>
    <property type="match status" value="1"/>
</dbReference>
<dbReference type="PANTHER" id="PTHR32234">
    <property type="entry name" value="THIOL:DISULFIDE INTERCHANGE PROTEIN DSBD"/>
    <property type="match status" value="1"/>
</dbReference>
<dbReference type="PANTHER" id="PTHR32234:SF0">
    <property type="entry name" value="THIOL:DISULFIDE INTERCHANGE PROTEIN DSBD"/>
    <property type="match status" value="1"/>
</dbReference>
<dbReference type="Pfam" id="PF11412">
    <property type="entry name" value="DsbD_N"/>
    <property type="match status" value="1"/>
</dbReference>
<dbReference type="Pfam" id="PF02683">
    <property type="entry name" value="DsbD_TM"/>
    <property type="match status" value="1"/>
</dbReference>
<dbReference type="Pfam" id="PF13098">
    <property type="entry name" value="Thioredoxin_2"/>
    <property type="match status" value="1"/>
</dbReference>
<dbReference type="SUPFAM" id="SSF74863">
    <property type="entry name" value="Thiol:disulfide interchange protein DsbD, N-terminal domain (DsbD-alpha)"/>
    <property type="match status" value="1"/>
</dbReference>
<dbReference type="SUPFAM" id="SSF52833">
    <property type="entry name" value="Thioredoxin-like"/>
    <property type="match status" value="1"/>
</dbReference>
<dbReference type="PROSITE" id="PS00194">
    <property type="entry name" value="THIOREDOXIN_1"/>
    <property type="match status" value="1"/>
</dbReference>
<dbReference type="PROSITE" id="PS51352">
    <property type="entry name" value="THIOREDOXIN_2"/>
    <property type="match status" value="1"/>
</dbReference>
<keyword id="KW-0997">Cell inner membrane</keyword>
<keyword id="KW-1003">Cell membrane</keyword>
<keyword id="KW-0201">Cytochrome c-type biogenesis</keyword>
<keyword id="KW-1015">Disulfide bond</keyword>
<keyword id="KW-0249">Electron transport</keyword>
<keyword id="KW-0472">Membrane</keyword>
<keyword id="KW-0520">NAD</keyword>
<keyword id="KW-0560">Oxidoreductase</keyword>
<keyword id="KW-0676">Redox-active center</keyword>
<keyword id="KW-0732">Signal</keyword>
<keyword id="KW-0812">Transmembrane</keyword>
<keyword id="KW-1133">Transmembrane helix</keyword>
<keyword id="KW-0813">Transport</keyword>
<proteinExistence type="inferred from homology"/>
<sequence>MKKLFLFFTLIFTAFAANSGLFDKKQTFLKVDDAFAFSATLSTDKSQLQAHWDIADGYYLYQDKISAELVGKSNPLSLHTQQAAELHQDPYFGEVKVFTHSIDGIFRGTFNNADDKVEITYQGCTEGFCYPPETKVLRIGDLAVSQEQIVEKTVEKNTALLSEQDRLADGLFHSKWAIFGFFVLGLGLAFTPCVLPMLPLLSAIVIGQQQRPNMMRAFSLAFLYVQGMALTYTLLGLAVAAIGLPFQIALQHPYVMIGLSILFVVLALSMFGLFTIQLPNSLQNKLNTWSQKQTSGAFGGAFAMGMIAGLVASPCTSAPLSGALLYVAQSGDLFTGAVTLYLLALGMGVPLMLITLFGNKILPKSGEWMNTVKQTFGFVMLALPVFLLSRILPEVWESRLWAGLATVFFIWFALQMSKNGFGYAIKIISFALAMVTVQPLQNWIWQTQTTTQSAVENMPVSQVKFKQIKNTEELDRTLAENPHSIAMLDLYADWCVACKEFEKLTFSDPQVQQQFQNILLLQVNMTKNSPENKALMERFNVMGLPTILFFDQQNNEIKGSRVTGFMDADAFSNWIEKLL</sequence>
<reference key="1">
    <citation type="journal article" date="2007" name="Genome Biol.">
        <title>Characterization and modeling of the Haemophilus influenzae core and supragenomes based on the complete genomic sequences of Rd and 12 clinical nontypeable strains.</title>
        <authorList>
            <person name="Hogg J.S."/>
            <person name="Hu F.Z."/>
            <person name="Janto B."/>
            <person name="Boissy R."/>
            <person name="Hayes J."/>
            <person name="Keefe R."/>
            <person name="Post J.C."/>
            <person name="Ehrlich G.D."/>
        </authorList>
    </citation>
    <scope>NUCLEOTIDE SEQUENCE [LARGE SCALE GENOMIC DNA]</scope>
    <source>
        <strain>PittGG</strain>
    </source>
</reference>